<keyword id="KW-0162">Chylomicron</keyword>
<keyword id="KW-0345">HDL</keyword>
<keyword id="KW-0427">LDL</keyword>
<keyword id="KW-0442">Lipid degradation</keyword>
<keyword id="KW-0443">Lipid metabolism</keyword>
<keyword id="KW-0445">Lipid transport</keyword>
<keyword id="KW-1185">Reference proteome</keyword>
<keyword id="KW-0964">Secreted</keyword>
<keyword id="KW-0732">Signal</keyword>
<keyword id="KW-0813">Transport</keyword>
<keyword id="KW-0850">VLDL</keyword>
<organism>
    <name type="scientific">Mus musculus</name>
    <name type="common">Mouse</name>
    <dbReference type="NCBI Taxonomy" id="10090"/>
    <lineage>
        <taxon>Eukaryota</taxon>
        <taxon>Metazoa</taxon>
        <taxon>Chordata</taxon>
        <taxon>Craniata</taxon>
        <taxon>Vertebrata</taxon>
        <taxon>Euteleostomi</taxon>
        <taxon>Mammalia</taxon>
        <taxon>Eutheria</taxon>
        <taxon>Euarchontoglires</taxon>
        <taxon>Glires</taxon>
        <taxon>Rodentia</taxon>
        <taxon>Myomorpha</taxon>
        <taxon>Muroidea</taxon>
        <taxon>Muridae</taxon>
        <taxon>Murinae</taxon>
        <taxon>Mus</taxon>
        <taxon>Mus</taxon>
    </lineage>
</organism>
<comment type="function">
    <text evidence="2">Component of chylomicrons, very low-density lipoproteins (VLDL), low-density lipoproteins (LDL), and high-density lipoproteins (HDL) in plasma. Plays an important role in lipoprotein metabolism as an activator of lipoprotein lipase.</text>
</comment>
<comment type="subcellular location">
    <subcellularLocation>
        <location evidence="2">Secreted</location>
    </subcellularLocation>
</comment>
<comment type="tissue specificity">
    <text evidence="3">Adult and fetal liver, intestine and peritoneal macrophages.</text>
</comment>
<comment type="similarity">
    <text evidence="4">Belongs to the apolipoprotein C2 family.</text>
</comment>
<sequence>MGSRFFLALFLVILMLGNEVQGNQEDDSGSLALLGTVQGSLLSYWTSAKEVAKDLYQKTYPISMDEKLRDMYSKSSAAMSTYAGIFTDQLLTLLRGE</sequence>
<dbReference type="EMBL" id="Z15090">
    <property type="protein sequence ID" value="CAA78804.1"/>
    <property type="molecule type" value="mRNA"/>
</dbReference>
<dbReference type="EMBL" id="Z22216">
    <property type="protein sequence ID" value="CAA80220.1"/>
    <property type="molecule type" value="Genomic_DNA"/>
</dbReference>
<dbReference type="EMBL" id="Z22217">
    <property type="protein sequence ID" value="CAA80220.1"/>
    <property type="status" value="JOINED"/>
    <property type="molecule type" value="Genomic_DNA"/>
</dbReference>
<dbReference type="EMBL" id="BC024697">
    <property type="protein sequence ID" value="AAH24697.1"/>
    <property type="molecule type" value="mRNA"/>
</dbReference>
<dbReference type="CCDS" id="CCDS39801.1"/>
<dbReference type="PIR" id="S31799">
    <property type="entry name" value="S31799"/>
</dbReference>
<dbReference type="RefSeq" id="NP_001264873.1">
    <property type="nucleotide sequence ID" value="NM_001277944.1"/>
</dbReference>
<dbReference type="RefSeq" id="NP_001296724.1">
    <property type="nucleotide sequence ID" value="NM_001309795.1"/>
</dbReference>
<dbReference type="SMR" id="Q05020"/>
<dbReference type="FunCoup" id="Q05020">
    <property type="interactions" value="11"/>
</dbReference>
<dbReference type="STRING" id="10090.ENSMUSP00000115173"/>
<dbReference type="GlyGen" id="Q05020">
    <property type="glycosylation" value="1 site, 1 O-linked glycan (1 site)"/>
</dbReference>
<dbReference type="iPTMnet" id="Q05020"/>
<dbReference type="PhosphoSitePlus" id="Q05020"/>
<dbReference type="jPOST" id="Q05020"/>
<dbReference type="PaxDb" id="10090-ENSMUSP00000115173"/>
<dbReference type="PeptideAtlas" id="Q05020"/>
<dbReference type="ProteomicsDB" id="296269"/>
<dbReference type="DNASU" id="11813"/>
<dbReference type="Ensembl" id="ENSMUST00000003074.16">
    <property type="protein sequence ID" value="ENSMUSP00000003074.10"/>
    <property type="gene ID" value="ENSMUSG00000002992.18"/>
</dbReference>
<dbReference type="Ensembl" id="ENSMUST00000127648.4">
    <property type="protein sequence ID" value="ENSMUSP00000118305.3"/>
    <property type="gene ID" value="ENSMUSG00000109350.2"/>
</dbReference>
<dbReference type="Ensembl" id="ENSMUST00000134116.8">
    <property type="protein sequence ID" value="ENSMUSP00000118291.2"/>
    <property type="gene ID" value="ENSMUSG00000002992.18"/>
</dbReference>
<dbReference type="Ensembl" id="ENSMUST00000142352.9">
    <property type="protein sequence ID" value="ENSMUSP00000115173.2"/>
    <property type="gene ID" value="ENSMUSG00000002992.18"/>
</dbReference>
<dbReference type="Ensembl" id="ENSMUST00000150569.9">
    <property type="protein sequence ID" value="ENSMUSP00000114512.2"/>
    <property type="gene ID" value="ENSMUSG00000109350.2"/>
</dbReference>
<dbReference type="GeneID" id="11813"/>
<dbReference type="KEGG" id="mmu:105886299"/>
<dbReference type="KEGG" id="mmu:11813"/>
<dbReference type="UCSC" id="uc009fmt.3">
    <property type="organism name" value="mouse"/>
</dbReference>
<dbReference type="AGR" id="MGI:88054"/>
<dbReference type="CTD" id="105886299"/>
<dbReference type="CTD" id="344"/>
<dbReference type="MGI" id="MGI:88054">
    <property type="gene designation" value="Apoc2"/>
</dbReference>
<dbReference type="VEuPathDB" id="HostDB:ENSMUSG00000002992"/>
<dbReference type="VEuPathDB" id="HostDB:ENSMUSG00000109350"/>
<dbReference type="eggNOG" id="ENOG502SEJB">
    <property type="taxonomic scope" value="Eukaryota"/>
</dbReference>
<dbReference type="GeneTree" id="ENSGT00390000007913"/>
<dbReference type="HOGENOM" id="CLU_180154_0_0_1"/>
<dbReference type="InParanoid" id="Q05020"/>
<dbReference type="OMA" id="GTHEPQE"/>
<dbReference type="OrthoDB" id="9881800at2759"/>
<dbReference type="PhylomeDB" id="Q05020"/>
<dbReference type="TreeFam" id="TF338218"/>
<dbReference type="Reactome" id="R-MMU-8963888">
    <property type="pathway name" value="Chylomicron assembly"/>
</dbReference>
<dbReference type="Reactome" id="R-MMU-8963901">
    <property type="pathway name" value="Chylomicron remodeling"/>
</dbReference>
<dbReference type="Reactome" id="R-MMU-8964058">
    <property type="pathway name" value="HDL remodeling"/>
</dbReference>
<dbReference type="Reactome" id="R-MMU-975634">
    <property type="pathway name" value="Retinoid metabolism and transport"/>
</dbReference>
<dbReference type="BioGRID-ORCS" id="105886299">
    <property type="hits" value="0 hits in 2 CRISPR screens"/>
</dbReference>
<dbReference type="BioGRID-ORCS" id="11813">
    <property type="hits" value="3 hits in 49 CRISPR screens"/>
</dbReference>
<dbReference type="ChiTaRS" id="Apoc2">
    <property type="organism name" value="mouse"/>
</dbReference>
<dbReference type="PRO" id="PR:Q05020"/>
<dbReference type="Proteomes" id="UP000000589">
    <property type="component" value="Chromosome 7"/>
</dbReference>
<dbReference type="RNAct" id="Q05020">
    <property type="molecule type" value="protein"/>
</dbReference>
<dbReference type="Bgee" id="ENSMUSG00000002992">
    <property type="expression patterns" value="Expressed in yolk sac and 73 other cell types or tissues"/>
</dbReference>
<dbReference type="ExpressionAtlas" id="Q05020">
    <property type="expression patterns" value="baseline and differential"/>
</dbReference>
<dbReference type="GO" id="GO:0042627">
    <property type="term" value="C:chylomicron"/>
    <property type="evidence" value="ECO:0007669"/>
    <property type="project" value="UniProtKB-KW"/>
</dbReference>
<dbReference type="GO" id="GO:0005829">
    <property type="term" value="C:cytosol"/>
    <property type="evidence" value="ECO:0000304"/>
    <property type="project" value="Reactome"/>
</dbReference>
<dbReference type="GO" id="GO:0005576">
    <property type="term" value="C:extracellular region"/>
    <property type="evidence" value="ECO:0000304"/>
    <property type="project" value="Reactome"/>
</dbReference>
<dbReference type="GO" id="GO:0034363">
    <property type="term" value="C:intermediate-density lipoprotein particle"/>
    <property type="evidence" value="ECO:0007669"/>
    <property type="project" value="Ensembl"/>
</dbReference>
<dbReference type="GO" id="GO:0034362">
    <property type="term" value="C:low-density lipoprotein particle"/>
    <property type="evidence" value="ECO:0007669"/>
    <property type="project" value="UniProtKB-KW"/>
</dbReference>
<dbReference type="GO" id="GO:0034366">
    <property type="term" value="C:spherical high-density lipoprotein particle"/>
    <property type="evidence" value="ECO:0007669"/>
    <property type="project" value="Ensembl"/>
</dbReference>
<dbReference type="GO" id="GO:0034361">
    <property type="term" value="C:very-low-density lipoprotein particle"/>
    <property type="evidence" value="ECO:0007669"/>
    <property type="project" value="UniProtKB-KW"/>
</dbReference>
<dbReference type="GO" id="GO:0055102">
    <property type="term" value="F:lipase inhibitor activity"/>
    <property type="evidence" value="ECO:0007669"/>
    <property type="project" value="Ensembl"/>
</dbReference>
<dbReference type="GO" id="GO:0008289">
    <property type="term" value="F:lipid binding"/>
    <property type="evidence" value="ECO:0007669"/>
    <property type="project" value="Ensembl"/>
</dbReference>
<dbReference type="GO" id="GO:0060230">
    <property type="term" value="F:lipoprotein lipase activator activity"/>
    <property type="evidence" value="ECO:0007669"/>
    <property type="project" value="Ensembl"/>
</dbReference>
<dbReference type="GO" id="GO:0016004">
    <property type="term" value="F:phospholipase activator activity"/>
    <property type="evidence" value="ECO:0007669"/>
    <property type="project" value="Ensembl"/>
</dbReference>
<dbReference type="GO" id="GO:0043274">
    <property type="term" value="F:phospholipase binding"/>
    <property type="evidence" value="ECO:0007669"/>
    <property type="project" value="Ensembl"/>
</dbReference>
<dbReference type="GO" id="GO:0033344">
    <property type="term" value="P:cholesterol efflux"/>
    <property type="evidence" value="ECO:0007669"/>
    <property type="project" value="Ensembl"/>
</dbReference>
<dbReference type="GO" id="GO:0034382">
    <property type="term" value="P:chylomicron remnant clearance"/>
    <property type="evidence" value="ECO:0007669"/>
    <property type="project" value="Ensembl"/>
</dbReference>
<dbReference type="GO" id="GO:0034371">
    <property type="term" value="P:chylomicron remodeling"/>
    <property type="evidence" value="ECO:0007669"/>
    <property type="project" value="Ensembl"/>
</dbReference>
<dbReference type="GO" id="GO:0034384">
    <property type="term" value="P:high-density lipoprotein particle clearance"/>
    <property type="evidence" value="ECO:0007669"/>
    <property type="project" value="Ensembl"/>
</dbReference>
<dbReference type="GO" id="GO:0016042">
    <property type="term" value="P:lipid catabolic process"/>
    <property type="evidence" value="ECO:0007669"/>
    <property type="project" value="UniProtKB-KW"/>
</dbReference>
<dbReference type="GO" id="GO:0032375">
    <property type="term" value="P:negative regulation of cholesterol transport"/>
    <property type="evidence" value="ECO:0007669"/>
    <property type="project" value="Ensembl"/>
</dbReference>
<dbReference type="GO" id="GO:0045833">
    <property type="term" value="P:negative regulation of lipid metabolic process"/>
    <property type="evidence" value="ECO:0007669"/>
    <property type="project" value="Ensembl"/>
</dbReference>
<dbReference type="GO" id="GO:0048261">
    <property type="term" value="P:negative regulation of receptor-mediated endocytosis"/>
    <property type="evidence" value="ECO:0007669"/>
    <property type="project" value="Ensembl"/>
</dbReference>
<dbReference type="GO" id="GO:0010916">
    <property type="term" value="P:negative regulation of very-low-density lipoprotein particle clearance"/>
    <property type="evidence" value="ECO:0007669"/>
    <property type="project" value="Ensembl"/>
</dbReference>
<dbReference type="GO" id="GO:0033700">
    <property type="term" value="P:phospholipid efflux"/>
    <property type="evidence" value="ECO:0007669"/>
    <property type="project" value="Ensembl"/>
</dbReference>
<dbReference type="GO" id="GO:0045723">
    <property type="term" value="P:positive regulation of fatty acid biosynthetic process"/>
    <property type="evidence" value="ECO:0007669"/>
    <property type="project" value="Ensembl"/>
</dbReference>
<dbReference type="GO" id="GO:0060697">
    <property type="term" value="P:positive regulation of phospholipid catabolic process"/>
    <property type="evidence" value="ECO:0007669"/>
    <property type="project" value="Ensembl"/>
</dbReference>
<dbReference type="GO" id="GO:0010898">
    <property type="term" value="P:positive regulation of triglyceride catabolic process"/>
    <property type="evidence" value="ECO:0007669"/>
    <property type="project" value="Ensembl"/>
</dbReference>
<dbReference type="GO" id="GO:0010902">
    <property type="term" value="P:positive regulation of very-low-density lipoprotein particle remodeling"/>
    <property type="evidence" value="ECO:0007669"/>
    <property type="project" value="Ensembl"/>
</dbReference>
<dbReference type="GO" id="GO:0070328">
    <property type="term" value="P:triglyceride homeostasis"/>
    <property type="evidence" value="ECO:0007669"/>
    <property type="project" value="Ensembl"/>
</dbReference>
<dbReference type="Gene3D" id="1.10.1440.10">
    <property type="entry name" value="Apolipoprotein C-II"/>
    <property type="match status" value="1"/>
</dbReference>
<dbReference type="InterPro" id="IPR008019">
    <property type="entry name" value="Apo-CII"/>
</dbReference>
<dbReference type="InterPro" id="IPR023121">
    <property type="entry name" value="ApoC-II_dom_sf"/>
</dbReference>
<dbReference type="PANTHER" id="PTHR16566">
    <property type="entry name" value="APOLIPOPROTEIN C-II"/>
    <property type="match status" value="1"/>
</dbReference>
<dbReference type="PANTHER" id="PTHR16566:SF0">
    <property type="entry name" value="APOLIPOPROTEIN C-II"/>
    <property type="match status" value="1"/>
</dbReference>
<dbReference type="Pfam" id="PF05355">
    <property type="entry name" value="Apo-CII"/>
    <property type="match status" value="1"/>
</dbReference>
<gene>
    <name type="primary">Apoc2</name>
</gene>
<proteinExistence type="evidence at transcript level"/>
<reference key="1">
    <citation type="journal article" date="1993" name="Genomics">
        <title>Evolutionary conservation of the mouse apolipoprotein E-C1-C2 gene cluster: structure and genetic variability in inbred mice.</title>
        <authorList>
            <person name="Hoffer M.J.V."/>
            <person name="Hofker M.H."/>
            <person name="van Eck M.M."/>
            <person name="Havekes L.M."/>
            <person name="Frants R.R."/>
        </authorList>
    </citation>
    <scope>NUCLEOTIDE SEQUENCE [GENOMIC DNA / MRNA]</scope>
    <source>
        <strain>C57BL/RIJ / 129/J</strain>
        <tissue>Liver</tissue>
    </source>
</reference>
<reference key="2">
    <citation type="journal article" date="1993" name="Genomics">
        <title>Structure and expression of the mouse apolipoprotein C2 gene.</title>
        <authorList>
            <person name="Hoffer M.J.V."/>
            <person name="van Eck M.M."/>
            <person name="Havekes L.M."/>
            <person name="Hofker M.H."/>
            <person name="Frants R.R."/>
        </authorList>
    </citation>
    <scope>NUCLEOTIDE SEQUENCE [GENOMIC DNA]</scope>
    <scope>TISSUE SPECIFICITY</scope>
    <source>
        <strain>C57BL/RIJ</strain>
    </source>
</reference>
<reference key="3">
    <citation type="journal article" date="2004" name="Genome Res.">
        <title>The status, quality, and expansion of the NIH full-length cDNA project: the Mammalian Gene Collection (MGC).</title>
        <authorList>
            <consortium name="The MGC Project Team"/>
        </authorList>
    </citation>
    <scope>NUCLEOTIDE SEQUENCE [LARGE SCALE MRNA]</scope>
    <source>
        <strain>FVB/N</strain>
        <tissue>Liver</tissue>
    </source>
</reference>
<protein>
    <recommendedName>
        <fullName>Apolipoprotein C-II</fullName>
        <shortName>Apo-CII</shortName>
        <shortName>ApoC-II</shortName>
    </recommendedName>
    <alternativeName>
        <fullName>Apolipoprotein C2</fullName>
    </alternativeName>
</protein>
<evidence type="ECO:0000250" key="1"/>
<evidence type="ECO:0000250" key="2">
    <source>
        <dbReference type="UniProtKB" id="P02655"/>
    </source>
</evidence>
<evidence type="ECO:0000269" key="3">
    <source>
    </source>
</evidence>
<evidence type="ECO:0000305" key="4"/>
<feature type="signal peptide" evidence="1">
    <location>
        <begin position="1"/>
        <end position="22"/>
    </location>
</feature>
<feature type="chain" id="PRO_0000002026" description="Apolipoprotein C-II">
    <location>
        <begin position="23"/>
        <end position="97"/>
    </location>
</feature>
<feature type="region of interest" description="Lipid binding" evidence="2">
    <location>
        <begin position="63"/>
        <end position="71"/>
    </location>
</feature>
<feature type="region of interest" description="Lipoprotein lipase cofactor" evidence="2">
    <location>
        <begin position="75"/>
        <end position="97"/>
    </location>
</feature>
<feature type="sequence conflict" description="In Ref. 2; CAA80220." evidence="4" ref="2">
    <original>Q</original>
    <variation>H</variation>
    <location>
        <position position="89"/>
    </location>
</feature>
<name>APOC2_MOUSE</name>
<accession>Q05020</accession>